<sequence length="127" mass="14365">MRHRKSGRQLNRNSSHRQAMFRNMAGSLVRHEIIKTTLPKAKELRRVVEPLITLAKTDSVANRRLAFARTRDNEIVAKLFNELGPRFASRAGGYTRILKCGFRAGDNAPMAYIELVDRSEKAEAAAE</sequence>
<name>RL17_SHIBS</name>
<dbReference type="EMBL" id="CP000036">
    <property type="protein sequence ID" value="ABB67776.1"/>
    <property type="molecule type" value="Genomic_DNA"/>
</dbReference>
<dbReference type="RefSeq" id="WP_001216368.1">
    <property type="nucleotide sequence ID" value="NC_007613.1"/>
</dbReference>
<dbReference type="SMR" id="Q31VY2"/>
<dbReference type="GeneID" id="97442834"/>
<dbReference type="KEGG" id="sbo:SBO_3288"/>
<dbReference type="HOGENOM" id="CLU_074407_2_0_6"/>
<dbReference type="Proteomes" id="UP000007067">
    <property type="component" value="Chromosome"/>
</dbReference>
<dbReference type="GO" id="GO:0022625">
    <property type="term" value="C:cytosolic large ribosomal subunit"/>
    <property type="evidence" value="ECO:0007669"/>
    <property type="project" value="TreeGrafter"/>
</dbReference>
<dbReference type="GO" id="GO:0003735">
    <property type="term" value="F:structural constituent of ribosome"/>
    <property type="evidence" value="ECO:0007669"/>
    <property type="project" value="InterPro"/>
</dbReference>
<dbReference type="GO" id="GO:0006412">
    <property type="term" value="P:translation"/>
    <property type="evidence" value="ECO:0007669"/>
    <property type="project" value="UniProtKB-UniRule"/>
</dbReference>
<dbReference type="FunFam" id="3.90.1030.10:FF:000001">
    <property type="entry name" value="50S ribosomal protein L17"/>
    <property type="match status" value="1"/>
</dbReference>
<dbReference type="Gene3D" id="3.90.1030.10">
    <property type="entry name" value="Ribosomal protein L17"/>
    <property type="match status" value="1"/>
</dbReference>
<dbReference type="HAMAP" id="MF_01368">
    <property type="entry name" value="Ribosomal_bL17"/>
    <property type="match status" value="1"/>
</dbReference>
<dbReference type="InterPro" id="IPR000456">
    <property type="entry name" value="Ribosomal_bL17"/>
</dbReference>
<dbReference type="InterPro" id="IPR047859">
    <property type="entry name" value="Ribosomal_bL17_CS"/>
</dbReference>
<dbReference type="InterPro" id="IPR036373">
    <property type="entry name" value="Ribosomal_bL17_sf"/>
</dbReference>
<dbReference type="NCBIfam" id="TIGR00059">
    <property type="entry name" value="L17"/>
    <property type="match status" value="1"/>
</dbReference>
<dbReference type="PANTHER" id="PTHR14413:SF16">
    <property type="entry name" value="LARGE RIBOSOMAL SUBUNIT PROTEIN BL17M"/>
    <property type="match status" value="1"/>
</dbReference>
<dbReference type="PANTHER" id="PTHR14413">
    <property type="entry name" value="RIBOSOMAL PROTEIN L17"/>
    <property type="match status" value="1"/>
</dbReference>
<dbReference type="Pfam" id="PF01196">
    <property type="entry name" value="Ribosomal_L17"/>
    <property type="match status" value="1"/>
</dbReference>
<dbReference type="SUPFAM" id="SSF64263">
    <property type="entry name" value="Prokaryotic ribosomal protein L17"/>
    <property type="match status" value="1"/>
</dbReference>
<dbReference type="PROSITE" id="PS01167">
    <property type="entry name" value="RIBOSOMAL_L17"/>
    <property type="match status" value="1"/>
</dbReference>
<feature type="chain" id="PRO_0000267945" description="Large ribosomal subunit protein bL17">
    <location>
        <begin position="1"/>
        <end position="127"/>
    </location>
</feature>
<accession>Q31VY2</accession>
<comment type="subunit">
    <text evidence="1">Part of the 50S ribosomal subunit. Contacts protein L32.</text>
</comment>
<comment type="similarity">
    <text evidence="1">Belongs to the bacterial ribosomal protein bL17 family.</text>
</comment>
<reference key="1">
    <citation type="journal article" date="2005" name="Nucleic Acids Res.">
        <title>Genome dynamics and diversity of Shigella species, the etiologic agents of bacillary dysentery.</title>
        <authorList>
            <person name="Yang F."/>
            <person name="Yang J."/>
            <person name="Zhang X."/>
            <person name="Chen L."/>
            <person name="Jiang Y."/>
            <person name="Yan Y."/>
            <person name="Tang X."/>
            <person name="Wang J."/>
            <person name="Xiong Z."/>
            <person name="Dong J."/>
            <person name="Xue Y."/>
            <person name="Zhu Y."/>
            <person name="Xu X."/>
            <person name="Sun L."/>
            <person name="Chen S."/>
            <person name="Nie H."/>
            <person name="Peng J."/>
            <person name="Xu J."/>
            <person name="Wang Y."/>
            <person name="Yuan Z."/>
            <person name="Wen Y."/>
            <person name="Yao Z."/>
            <person name="Shen Y."/>
            <person name="Qiang B."/>
            <person name="Hou Y."/>
            <person name="Yu J."/>
            <person name="Jin Q."/>
        </authorList>
    </citation>
    <scope>NUCLEOTIDE SEQUENCE [LARGE SCALE GENOMIC DNA]</scope>
    <source>
        <strain>Sb227</strain>
    </source>
</reference>
<evidence type="ECO:0000255" key="1">
    <source>
        <dbReference type="HAMAP-Rule" id="MF_01368"/>
    </source>
</evidence>
<evidence type="ECO:0000305" key="2"/>
<proteinExistence type="inferred from homology"/>
<keyword id="KW-0687">Ribonucleoprotein</keyword>
<keyword id="KW-0689">Ribosomal protein</keyword>
<organism>
    <name type="scientific">Shigella boydii serotype 4 (strain Sb227)</name>
    <dbReference type="NCBI Taxonomy" id="300268"/>
    <lineage>
        <taxon>Bacteria</taxon>
        <taxon>Pseudomonadati</taxon>
        <taxon>Pseudomonadota</taxon>
        <taxon>Gammaproteobacteria</taxon>
        <taxon>Enterobacterales</taxon>
        <taxon>Enterobacteriaceae</taxon>
        <taxon>Shigella</taxon>
    </lineage>
</organism>
<protein>
    <recommendedName>
        <fullName evidence="1">Large ribosomal subunit protein bL17</fullName>
    </recommendedName>
    <alternativeName>
        <fullName evidence="2">50S ribosomal protein L17</fullName>
    </alternativeName>
</protein>
<gene>
    <name evidence="1" type="primary">rplQ</name>
    <name type="ordered locus">SBO_3288</name>
</gene>